<reference key="1">
    <citation type="submission" date="2005-06" db="EMBL/GenBank/DDBJ databases">
        <title>DNA sequences of macaque genes expressed in brain or testis and its evolutionary implications.</title>
        <authorList>
            <consortium name="International consortium for macaque cDNA sequencing and analysis"/>
        </authorList>
    </citation>
    <scope>NUCLEOTIDE SEQUENCE [LARGE SCALE MRNA]</scope>
    <source>
        <tissue>Testis</tissue>
    </source>
</reference>
<protein>
    <recommendedName>
        <fullName>Coiled-coil domain-containing protein 112</fullName>
    </recommendedName>
</protein>
<name>CC112_MACFA</name>
<gene>
    <name type="primary">CCDC112</name>
    <name type="ORF">QtsA-11732</name>
</gene>
<comment type="subcellular location">
    <subcellularLocation>
        <location evidence="1">Cytoplasm</location>
        <location evidence="1">Cytoskeleton</location>
        <location evidence="1">Microtubule organizing center</location>
        <location evidence="1">Centrosome</location>
        <location evidence="1">Centriolar satellite</location>
    </subcellularLocation>
</comment>
<proteinExistence type="evidence at transcript level"/>
<evidence type="ECO:0000250" key="1">
    <source>
        <dbReference type="UniProtKB" id="Q8NEF3"/>
    </source>
</evidence>
<evidence type="ECO:0000255" key="2"/>
<evidence type="ECO:0000256" key="3">
    <source>
        <dbReference type="SAM" id="MobiDB-lite"/>
    </source>
</evidence>
<sequence>MEKDKHSHFYNQKSDFRIEHSMLEELENKLINSRKTERAKIQQQLAKIHNNVKKLQHQLKDVKPTPDFVEKLREMMEEIENAINTFKEEQRLIYEELIKEEKTTNNELSAISRKIDTWALGNSETEKAFRAISSKVPVDKVTPSTLPEEVLDFEKFLQQTGGRQGGWDDYDHQNFVKVRNKHKGKPTFMEEVLEHLPGKTQDEVQQHEKWYQKFLALEERKKESIQSWKTKKQQKREEIFKLNEKANNTPMLFHNKPEDNQKQKEEQRKKQKLAVEAWKKQKSIEMSMKYASHLKEEEEKEKKRQKERQRQFKLKLLLESYTQQKKEQEEFLRLEKEKREKAEKAEKRKTAADGISRFQERDLHKLELKILDRQAKEDEKAQKQRRLAKLKEKVENNVSRDPSRLYKPTKGWEERTKKIGPTGSGPLLHIPHRAIPTWRQGIQRRV</sequence>
<feature type="chain" id="PRO_0000320161" description="Coiled-coil domain-containing protein 112">
    <location>
        <begin position="1"/>
        <end position="446"/>
    </location>
</feature>
<feature type="region of interest" description="Disordered" evidence="3">
    <location>
        <begin position="247"/>
        <end position="277"/>
    </location>
</feature>
<feature type="region of interest" description="Disordered" evidence="3">
    <location>
        <begin position="394"/>
        <end position="430"/>
    </location>
</feature>
<feature type="coiled-coil region" evidence="2">
    <location>
        <begin position="23"/>
        <end position="116"/>
    </location>
</feature>
<feature type="coiled-coil region" evidence="2">
    <location>
        <begin position="219"/>
        <end position="400"/>
    </location>
</feature>
<feature type="compositionally biased region" description="Basic and acidic residues" evidence="3">
    <location>
        <begin position="255"/>
        <end position="268"/>
    </location>
</feature>
<dbReference type="EMBL" id="AB168386">
    <property type="protein sequence ID" value="BAE00508.1"/>
    <property type="molecule type" value="mRNA"/>
</dbReference>
<dbReference type="SMR" id="Q4R8R3"/>
<dbReference type="STRING" id="9541.ENSMFAP00000015486"/>
<dbReference type="eggNOG" id="ENOG502QUHE">
    <property type="taxonomic scope" value="Eukaryota"/>
</dbReference>
<dbReference type="Proteomes" id="UP000233100">
    <property type="component" value="Unplaced"/>
</dbReference>
<dbReference type="GO" id="GO:0034451">
    <property type="term" value="C:centriolar satellite"/>
    <property type="evidence" value="ECO:0007669"/>
    <property type="project" value="UniProtKB-SubCell"/>
</dbReference>
<dbReference type="GO" id="GO:0005737">
    <property type="term" value="C:cytoplasm"/>
    <property type="evidence" value="ECO:0007669"/>
    <property type="project" value="UniProtKB-KW"/>
</dbReference>
<dbReference type="InterPro" id="IPR039902">
    <property type="entry name" value="CCDC148/CCDC112"/>
</dbReference>
<dbReference type="PANTHER" id="PTHR21549:SF0">
    <property type="entry name" value="COILED-COIL DOMAIN-CONTAINING PROTEIN 112"/>
    <property type="match status" value="1"/>
</dbReference>
<dbReference type="PANTHER" id="PTHR21549">
    <property type="entry name" value="MUTATED IN BLADDER CANCER 1"/>
    <property type="match status" value="1"/>
</dbReference>
<organism>
    <name type="scientific">Macaca fascicularis</name>
    <name type="common">Crab-eating macaque</name>
    <name type="synonym">Cynomolgus monkey</name>
    <dbReference type="NCBI Taxonomy" id="9541"/>
    <lineage>
        <taxon>Eukaryota</taxon>
        <taxon>Metazoa</taxon>
        <taxon>Chordata</taxon>
        <taxon>Craniata</taxon>
        <taxon>Vertebrata</taxon>
        <taxon>Euteleostomi</taxon>
        <taxon>Mammalia</taxon>
        <taxon>Eutheria</taxon>
        <taxon>Euarchontoglires</taxon>
        <taxon>Primates</taxon>
        <taxon>Haplorrhini</taxon>
        <taxon>Catarrhini</taxon>
        <taxon>Cercopithecidae</taxon>
        <taxon>Cercopithecinae</taxon>
        <taxon>Macaca</taxon>
    </lineage>
</organism>
<keyword id="KW-0175">Coiled coil</keyword>
<keyword id="KW-0963">Cytoplasm</keyword>
<keyword id="KW-0206">Cytoskeleton</keyword>
<keyword id="KW-1185">Reference proteome</keyword>
<accession>Q4R8R3</accession>